<proteinExistence type="inferred from homology"/>
<organism>
    <name type="scientific">Salinispora arenicola (strain CNS-205)</name>
    <dbReference type="NCBI Taxonomy" id="391037"/>
    <lineage>
        <taxon>Bacteria</taxon>
        <taxon>Bacillati</taxon>
        <taxon>Actinomycetota</taxon>
        <taxon>Actinomycetes</taxon>
        <taxon>Micromonosporales</taxon>
        <taxon>Micromonosporaceae</taxon>
        <taxon>Salinispora</taxon>
    </lineage>
</organism>
<keyword id="KW-0687">Ribonucleoprotein</keyword>
<keyword id="KW-0689">Ribosomal protein</keyword>
<protein>
    <recommendedName>
        <fullName evidence="1">Small ribosomal subunit protein uS2</fullName>
    </recommendedName>
    <alternativeName>
        <fullName evidence="3">30S ribosomal protein S2</fullName>
    </alternativeName>
</protein>
<gene>
    <name evidence="1" type="primary">rpsB</name>
    <name type="ordered locus">Sare_1230</name>
</gene>
<sequence>MAVVTMRQLLESGVHFGHQTRRWNPKMKRFIFTERNGIYIIDLRQTLDYIEKAYDFVRGTVAEGGSILFVGTKKQAQEAIAEQATRVGQPYVNHRWLGGMLTNFQTVYKRLQRMKELEALGDLSGTAAGYTKKETLQLSREKEKLSRTLGGLRDMQKLPAAIWVVDTKKEHIAVDEARKLGIPVIAVLDTNCDPDEVDYPIPGNDDAIRSAELLTKVVAAAVADGLIARSGRRRGTDEKPEAGVASDEPLAEWERELLEEPKKSDEPKSDEQPAAAAAE</sequence>
<dbReference type="EMBL" id="CP000850">
    <property type="protein sequence ID" value="ABV97136.1"/>
    <property type="molecule type" value="Genomic_DNA"/>
</dbReference>
<dbReference type="SMR" id="A8M6B1"/>
<dbReference type="STRING" id="391037.Sare_1230"/>
<dbReference type="KEGG" id="saq:Sare_1230"/>
<dbReference type="PATRIC" id="fig|391037.6.peg.1246"/>
<dbReference type="eggNOG" id="COG0052">
    <property type="taxonomic scope" value="Bacteria"/>
</dbReference>
<dbReference type="HOGENOM" id="CLU_040318_2_3_11"/>
<dbReference type="OrthoDB" id="9808036at2"/>
<dbReference type="GO" id="GO:0022627">
    <property type="term" value="C:cytosolic small ribosomal subunit"/>
    <property type="evidence" value="ECO:0007669"/>
    <property type="project" value="TreeGrafter"/>
</dbReference>
<dbReference type="GO" id="GO:0003735">
    <property type="term" value="F:structural constituent of ribosome"/>
    <property type="evidence" value="ECO:0007669"/>
    <property type="project" value="InterPro"/>
</dbReference>
<dbReference type="GO" id="GO:0006412">
    <property type="term" value="P:translation"/>
    <property type="evidence" value="ECO:0007669"/>
    <property type="project" value="UniProtKB-UniRule"/>
</dbReference>
<dbReference type="CDD" id="cd01425">
    <property type="entry name" value="RPS2"/>
    <property type="match status" value="1"/>
</dbReference>
<dbReference type="FunFam" id="1.10.287.610:FF:000001">
    <property type="entry name" value="30S ribosomal protein S2"/>
    <property type="match status" value="1"/>
</dbReference>
<dbReference type="Gene3D" id="3.40.50.10490">
    <property type="entry name" value="Glucose-6-phosphate isomerase like protein, domain 1"/>
    <property type="match status" value="1"/>
</dbReference>
<dbReference type="Gene3D" id="1.10.287.610">
    <property type="entry name" value="Helix hairpin bin"/>
    <property type="match status" value="1"/>
</dbReference>
<dbReference type="HAMAP" id="MF_00291_B">
    <property type="entry name" value="Ribosomal_uS2_B"/>
    <property type="match status" value="1"/>
</dbReference>
<dbReference type="InterPro" id="IPR001865">
    <property type="entry name" value="Ribosomal_uS2"/>
</dbReference>
<dbReference type="InterPro" id="IPR005706">
    <property type="entry name" value="Ribosomal_uS2_bac/mit/plastid"/>
</dbReference>
<dbReference type="InterPro" id="IPR018130">
    <property type="entry name" value="Ribosomal_uS2_CS"/>
</dbReference>
<dbReference type="InterPro" id="IPR023591">
    <property type="entry name" value="Ribosomal_uS2_flav_dom_sf"/>
</dbReference>
<dbReference type="NCBIfam" id="TIGR01011">
    <property type="entry name" value="rpsB_bact"/>
    <property type="match status" value="1"/>
</dbReference>
<dbReference type="PANTHER" id="PTHR12534">
    <property type="entry name" value="30S RIBOSOMAL PROTEIN S2 PROKARYOTIC AND ORGANELLAR"/>
    <property type="match status" value="1"/>
</dbReference>
<dbReference type="PANTHER" id="PTHR12534:SF0">
    <property type="entry name" value="SMALL RIBOSOMAL SUBUNIT PROTEIN US2M"/>
    <property type="match status" value="1"/>
</dbReference>
<dbReference type="Pfam" id="PF00318">
    <property type="entry name" value="Ribosomal_S2"/>
    <property type="match status" value="1"/>
</dbReference>
<dbReference type="PRINTS" id="PR00395">
    <property type="entry name" value="RIBOSOMALS2"/>
</dbReference>
<dbReference type="SUPFAM" id="SSF52313">
    <property type="entry name" value="Ribosomal protein S2"/>
    <property type="match status" value="1"/>
</dbReference>
<dbReference type="PROSITE" id="PS00962">
    <property type="entry name" value="RIBOSOMAL_S2_1"/>
    <property type="match status" value="1"/>
</dbReference>
<reference key="1">
    <citation type="submission" date="2007-10" db="EMBL/GenBank/DDBJ databases">
        <title>Complete sequence of Salinispora arenicola CNS-205.</title>
        <authorList>
            <consortium name="US DOE Joint Genome Institute"/>
            <person name="Copeland A."/>
            <person name="Lucas S."/>
            <person name="Lapidus A."/>
            <person name="Barry K."/>
            <person name="Glavina del Rio T."/>
            <person name="Dalin E."/>
            <person name="Tice H."/>
            <person name="Pitluck S."/>
            <person name="Foster B."/>
            <person name="Schmutz J."/>
            <person name="Larimer F."/>
            <person name="Land M."/>
            <person name="Hauser L."/>
            <person name="Kyrpides N."/>
            <person name="Ivanova N."/>
            <person name="Jensen P.R."/>
            <person name="Moore B.S."/>
            <person name="Penn K."/>
            <person name="Jenkins C."/>
            <person name="Udwary D."/>
            <person name="Xiang L."/>
            <person name="Gontang E."/>
            <person name="Richardson P."/>
        </authorList>
    </citation>
    <scope>NUCLEOTIDE SEQUENCE [LARGE SCALE GENOMIC DNA]</scope>
    <source>
        <strain>CNS-205</strain>
    </source>
</reference>
<comment type="similarity">
    <text evidence="1">Belongs to the universal ribosomal protein uS2 family.</text>
</comment>
<accession>A8M6B1</accession>
<feature type="chain" id="PRO_1000078896" description="Small ribosomal subunit protein uS2">
    <location>
        <begin position="1"/>
        <end position="279"/>
    </location>
</feature>
<feature type="region of interest" description="Disordered" evidence="2">
    <location>
        <begin position="232"/>
        <end position="279"/>
    </location>
</feature>
<feature type="compositionally biased region" description="Basic and acidic residues" evidence="2">
    <location>
        <begin position="252"/>
        <end position="271"/>
    </location>
</feature>
<name>RS2_SALAI</name>
<evidence type="ECO:0000255" key="1">
    <source>
        <dbReference type="HAMAP-Rule" id="MF_00291"/>
    </source>
</evidence>
<evidence type="ECO:0000256" key="2">
    <source>
        <dbReference type="SAM" id="MobiDB-lite"/>
    </source>
</evidence>
<evidence type="ECO:0000305" key="3"/>